<sequence length="420" mass="48860">MKRAVVILWLPLAFTNLYILTTFCQRTDNLTFVVAVFRHGDRAPIDTYPNDPHKEKLWPNGLQQLTQEGMRQQYELGRFLRRRYDHFLSSTYNRQEIYVRSTDYDRTLMSAQASLAGLYPPNGSQLWHRDIHWQPIPVHTVPASQDRLLKFPSKDCPRYYELMRETIQQPEYQDKVNSWKDFMERIANYTGYRAETTISRWVWKVYDTLFCQKSHNISLPSWATADVVKTLKEISAFDVKTHVEMHKTNEKARLTGGILVDALLRNFSDVVNKSLPLKMLMYSAHDSTLIALQGALKVYNGLHPPYSSCHIIEFYKEADGTHSVRMFYRNETVREPYELALPGCDSPCPLLNFTQLMAPVISMDWKKDCASDGSLQYRIGSENNTVLALSICVGILGLTLTVMLFCLWRTYKLPVRRYQR</sequence>
<protein>
    <recommendedName>
        <fullName>Testicular acid phosphatase homolog</fullName>
        <ecNumber>3.1.3.2</ecNumber>
    </recommendedName>
    <alternativeName>
        <fullName evidence="2">Acid phosphatase 4</fullName>
    </alternativeName>
</protein>
<reference key="1">
    <citation type="submission" date="2005-10" db="EMBL/GenBank/DDBJ databases">
        <authorList>
            <consortium name="NIH - Xenopus Gene Collection (XGC) project"/>
        </authorList>
    </citation>
    <scope>NUCLEOTIDE SEQUENCE [LARGE SCALE MRNA]</scope>
    <source>
        <tissue>Embryo</tissue>
        <tissue>Kidney</tissue>
    </source>
</reference>
<comment type="catalytic activity">
    <reaction>
        <text>a phosphate monoester + H2O = an alcohol + phosphate</text>
        <dbReference type="Rhea" id="RHEA:15017"/>
        <dbReference type="ChEBI" id="CHEBI:15377"/>
        <dbReference type="ChEBI" id="CHEBI:30879"/>
        <dbReference type="ChEBI" id="CHEBI:43474"/>
        <dbReference type="ChEBI" id="CHEBI:67140"/>
        <dbReference type="EC" id="3.1.3.2"/>
    </reaction>
</comment>
<comment type="subunit">
    <text evidence="1">Homodimer.</text>
</comment>
<comment type="subcellular location">
    <subcellularLocation>
        <location evidence="4">Membrane</location>
        <topology evidence="4">Single-pass type I membrane protein</topology>
    </subcellularLocation>
</comment>
<comment type="similarity">
    <text evidence="4">Belongs to the histidine acid phosphatase family.</text>
</comment>
<dbReference type="EC" id="3.1.3.2"/>
<dbReference type="EMBL" id="BC094140">
    <property type="protein sequence ID" value="AAH94140.1"/>
    <property type="molecule type" value="mRNA"/>
</dbReference>
<dbReference type="EMBL" id="BC106212">
    <property type="protein sequence ID" value="AAI06213.1"/>
    <property type="molecule type" value="mRNA"/>
</dbReference>
<dbReference type="RefSeq" id="NP_001087080.1">
    <property type="nucleotide sequence ID" value="NM_001093611.1"/>
</dbReference>
<dbReference type="SMR" id="Q3KQG9"/>
<dbReference type="GlyCosmos" id="Q3KQG9">
    <property type="glycosylation" value="9 sites, No reported glycans"/>
</dbReference>
<dbReference type="DNASU" id="446918"/>
<dbReference type="GeneID" id="446918"/>
<dbReference type="KEGG" id="xla:446918"/>
<dbReference type="AGR" id="Xenbase:XB-GENE-960834"/>
<dbReference type="CTD" id="446918"/>
<dbReference type="Xenbase" id="XB-GENE-960834">
    <property type="gene designation" value="acp4.S"/>
</dbReference>
<dbReference type="OrthoDB" id="258392at2759"/>
<dbReference type="Proteomes" id="UP000186698">
    <property type="component" value="Chromosome 7S"/>
</dbReference>
<dbReference type="Bgee" id="446918">
    <property type="expression patterns" value="Expressed in liver and 15 other cell types or tissues"/>
</dbReference>
<dbReference type="GO" id="GO:0005764">
    <property type="term" value="C:lysosome"/>
    <property type="evidence" value="ECO:0000318"/>
    <property type="project" value="GO_Central"/>
</dbReference>
<dbReference type="GO" id="GO:0045211">
    <property type="term" value="C:postsynaptic membrane"/>
    <property type="evidence" value="ECO:0000318"/>
    <property type="project" value="GO_Central"/>
</dbReference>
<dbReference type="GO" id="GO:0003993">
    <property type="term" value="F:acid phosphatase activity"/>
    <property type="evidence" value="ECO:0000318"/>
    <property type="project" value="GO_Central"/>
</dbReference>
<dbReference type="GO" id="GO:0004725">
    <property type="term" value="F:protein tyrosine phosphatase activity"/>
    <property type="evidence" value="ECO:0000318"/>
    <property type="project" value="GO_Central"/>
</dbReference>
<dbReference type="GO" id="GO:0030971">
    <property type="term" value="F:receptor tyrosine kinase binding"/>
    <property type="evidence" value="ECO:0000318"/>
    <property type="project" value="GO_Central"/>
</dbReference>
<dbReference type="GO" id="GO:0007040">
    <property type="term" value="P:lysosome organization"/>
    <property type="evidence" value="ECO:0007669"/>
    <property type="project" value="TreeGrafter"/>
</dbReference>
<dbReference type="GO" id="GO:0120154">
    <property type="term" value="P:negative regulation of ERBB4 signaling pathway"/>
    <property type="evidence" value="ECO:0000318"/>
    <property type="project" value="GO_Central"/>
</dbReference>
<dbReference type="GO" id="GO:0048168">
    <property type="term" value="P:regulation of neuronal synaptic plasticity"/>
    <property type="evidence" value="ECO:0000318"/>
    <property type="project" value="GO_Central"/>
</dbReference>
<dbReference type="CDD" id="cd07061">
    <property type="entry name" value="HP_HAP_like"/>
    <property type="match status" value="1"/>
</dbReference>
<dbReference type="FunFam" id="3.40.50.1240:FF:000010">
    <property type="entry name" value="Prostatic acid phosphatase"/>
    <property type="match status" value="1"/>
</dbReference>
<dbReference type="Gene3D" id="3.40.50.1240">
    <property type="entry name" value="Phosphoglycerate mutase-like"/>
    <property type="match status" value="1"/>
</dbReference>
<dbReference type="InterPro" id="IPR033379">
    <property type="entry name" value="Acid_Pase_AS"/>
</dbReference>
<dbReference type="InterPro" id="IPR000560">
    <property type="entry name" value="His_Pase_clade-2"/>
</dbReference>
<dbReference type="InterPro" id="IPR029033">
    <property type="entry name" value="His_PPase_superfam"/>
</dbReference>
<dbReference type="InterPro" id="IPR050645">
    <property type="entry name" value="Histidine_acid_phosphatase"/>
</dbReference>
<dbReference type="PANTHER" id="PTHR11567">
    <property type="entry name" value="ACID PHOSPHATASE-RELATED"/>
    <property type="match status" value="1"/>
</dbReference>
<dbReference type="PANTHER" id="PTHR11567:SF145">
    <property type="entry name" value="TESTICULAR ACID PHOSPHATASE"/>
    <property type="match status" value="1"/>
</dbReference>
<dbReference type="Pfam" id="PF00328">
    <property type="entry name" value="His_Phos_2"/>
    <property type="match status" value="1"/>
</dbReference>
<dbReference type="SUPFAM" id="SSF53254">
    <property type="entry name" value="Phosphoglycerate mutase-like"/>
    <property type="match status" value="1"/>
</dbReference>
<dbReference type="PROSITE" id="PS00616">
    <property type="entry name" value="HIS_ACID_PHOSPHAT_1"/>
    <property type="match status" value="1"/>
</dbReference>
<dbReference type="PROSITE" id="PS00778">
    <property type="entry name" value="HIS_ACID_PHOSPHAT_2"/>
    <property type="match status" value="1"/>
</dbReference>
<proteinExistence type="evidence at transcript level"/>
<gene>
    <name evidence="2" type="primary">acp4</name>
    <name evidence="2" type="synonym">acpt</name>
</gene>
<keyword id="KW-1015">Disulfide bond</keyword>
<keyword id="KW-0325">Glycoprotein</keyword>
<keyword id="KW-0378">Hydrolase</keyword>
<keyword id="KW-0472">Membrane</keyword>
<keyword id="KW-1185">Reference proteome</keyword>
<keyword id="KW-0732">Signal</keyword>
<keyword id="KW-0812">Transmembrane</keyword>
<keyword id="KW-1133">Transmembrane helix</keyword>
<evidence type="ECO:0000250" key="1"/>
<evidence type="ECO:0000250" key="2">
    <source>
        <dbReference type="UniProtKB" id="Q9BZG2"/>
    </source>
</evidence>
<evidence type="ECO:0000255" key="3"/>
<evidence type="ECO:0000305" key="4"/>
<organism>
    <name type="scientific">Xenopus laevis</name>
    <name type="common">African clawed frog</name>
    <dbReference type="NCBI Taxonomy" id="8355"/>
    <lineage>
        <taxon>Eukaryota</taxon>
        <taxon>Metazoa</taxon>
        <taxon>Chordata</taxon>
        <taxon>Craniata</taxon>
        <taxon>Vertebrata</taxon>
        <taxon>Euteleostomi</taxon>
        <taxon>Amphibia</taxon>
        <taxon>Batrachia</taxon>
        <taxon>Anura</taxon>
        <taxon>Pipoidea</taxon>
        <taxon>Pipidae</taxon>
        <taxon>Xenopodinae</taxon>
        <taxon>Xenopus</taxon>
        <taxon>Xenopus</taxon>
    </lineage>
</organism>
<feature type="signal peptide" evidence="3">
    <location>
        <begin position="1"/>
        <end position="24"/>
    </location>
</feature>
<feature type="chain" id="PRO_0000259644" description="Testicular acid phosphatase homolog">
    <location>
        <begin position="25"/>
        <end position="420"/>
    </location>
</feature>
<feature type="topological domain" description="Extracellular" evidence="3">
    <location>
        <begin position="25"/>
        <end position="385"/>
    </location>
</feature>
<feature type="transmembrane region" description="Helical" evidence="3">
    <location>
        <begin position="386"/>
        <end position="406"/>
    </location>
</feature>
<feature type="topological domain" description="Cytoplasmic" evidence="3">
    <location>
        <begin position="407"/>
        <end position="420"/>
    </location>
</feature>
<feature type="active site" description="Nucleophile" evidence="1">
    <location>
        <position position="39"/>
    </location>
</feature>
<feature type="active site" description="Proton donor" evidence="1">
    <location>
        <position position="286"/>
    </location>
</feature>
<feature type="glycosylation site" description="N-linked (GlcNAc...) asparagine" evidence="3">
    <location>
        <position position="29"/>
    </location>
</feature>
<feature type="glycosylation site" description="N-linked (GlcNAc...) asparagine" evidence="3">
    <location>
        <position position="122"/>
    </location>
</feature>
<feature type="glycosylation site" description="N-linked (GlcNAc...) asparagine" evidence="3">
    <location>
        <position position="188"/>
    </location>
</feature>
<feature type="glycosylation site" description="N-linked (GlcNAc...) asparagine" evidence="3">
    <location>
        <position position="216"/>
    </location>
</feature>
<feature type="glycosylation site" description="N-linked (GlcNAc...) asparagine" evidence="3">
    <location>
        <position position="266"/>
    </location>
</feature>
<feature type="glycosylation site" description="N-linked (GlcNAc...) asparagine" evidence="3">
    <location>
        <position position="272"/>
    </location>
</feature>
<feature type="glycosylation site" description="N-linked (GlcNAc...) asparagine" evidence="3">
    <location>
        <position position="330"/>
    </location>
</feature>
<feature type="glycosylation site" description="N-linked (GlcNAc...) asparagine" evidence="3">
    <location>
        <position position="352"/>
    </location>
</feature>
<feature type="glycosylation site" description="N-linked (GlcNAc...) asparagine" evidence="3">
    <location>
        <position position="383"/>
    </location>
</feature>
<feature type="disulfide bond" evidence="1">
    <location>
        <begin position="156"/>
        <end position="369"/>
    </location>
</feature>
<feature type="disulfide bond" evidence="1">
    <location>
        <begin position="211"/>
        <end position="309"/>
    </location>
</feature>
<feature type="disulfide bond" evidence="1">
    <location>
        <begin position="344"/>
        <end position="348"/>
    </location>
</feature>
<feature type="sequence conflict" description="In Ref. 1; AAH94140." evidence="4" ref="1">
    <original>E</original>
    <variation>D</variation>
    <location>
        <position position="171"/>
    </location>
</feature>
<accession>Q3KQG9</accession>
<accession>Q52KY6</accession>
<name>PPAT_XENLA</name>